<proteinExistence type="evidence at protein level"/>
<accession>P00370</accession>
<accession>P78173</accession>
<gene>
    <name evidence="8" type="primary">gdhA</name>
    <name type="ordered locus">b1761</name>
    <name type="ordered locus">JW1750</name>
</gene>
<sequence>MDQTYSLESFLNHVQKRDPNQTEFAQAVREVMTTLWPFLEQNPKYRQMSLLERLVEPERVIQFRVVWVDDRNQIQVNRAWRVQFSSAIGPYKGGMRFHPSVNLSILKFLGFEQTFKNALTTLPMGGGKGGSDFDPKGKSEGEVMRFCQALMTELYRHLGADTDVPAGDIGVGGREVGFMAGMMKKLSNNTACVFTGKGLSFGGSLIRPEATGYGLVYFTEAMLKRHGMGFEGMRVSVSGSGNVAQYAIEKAMEFGARVITASDSSGTVVDESGFTKEKLARLIEIKASRDGRVADYAKEFGLVYLEGQQPWSLPVDIALPCATQNELDVDAAHQLIANGVKAVAEGANMPTTIEATELFQQAGVLFAPGKAANAGGVATSGLEMAQNAARLGWKAEKVDARLHHIMLDIHHACVEHGGEGEQTNYVQGANIAGFVKVADAMLAQGVI</sequence>
<keyword id="KW-0002">3D-structure</keyword>
<keyword id="KW-0903">Direct protein sequencing</keyword>
<keyword id="KW-0521">NADP</keyword>
<keyword id="KW-0560">Oxidoreductase</keyword>
<keyword id="KW-1185">Reference proteome</keyword>
<comment type="function">
    <text evidence="3 4">Catalyzes the reversible oxidative deamination of glutamate to alpha-ketoglutarate and ammonia.</text>
</comment>
<comment type="catalytic activity">
    <reaction evidence="3 4">
        <text>L-glutamate + NADP(+) + H2O = 2-oxoglutarate + NH4(+) + NADPH + H(+)</text>
        <dbReference type="Rhea" id="RHEA:11612"/>
        <dbReference type="ChEBI" id="CHEBI:15377"/>
        <dbReference type="ChEBI" id="CHEBI:15378"/>
        <dbReference type="ChEBI" id="CHEBI:16810"/>
        <dbReference type="ChEBI" id="CHEBI:28938"/>
        <dbReference type="ChEBI" id="CHEBI:29985"/>
        <dbReference type="ChEBI" id="CHEBI:57783"/>
        <dbReference type="ChEBI" id="CHEBI:58349"/>
        <dbReference type="EC" id="1.4.1.4"/>
    </reaction>
</comment>
<comment type="activity regulation">
    <text evidence="4">Competitively inhibited by homoserine and by glutamine.</text>
</comment>
<comment type="biophysicochemical properties">
    <kinetics>
        <KM evidence="4">40 uM for NADPH</KM>
        <KM evidence="4">42 uM for NADP</KM>
        <KM evidence="4">640 uM for 2-oxoglutarate</KM>
        <KM evidence="4">1100 uM for ammonia</KM>
    </kinetics>
    <phDependence>
        <text evidence="3">Optimum pH is 8 and 9 for the reductive amination and for the oxidative deamination, respectively.</text>
    </phDependence>
    <temperatureDependence>
        <text evidence="4">The enzyme remains active when heat treated or when left at room temperature for several months but is inactivated by freezing.</text>
    </temperatureDependence>
</comment>
<comment type="subunit">
    <text evidence="3 4 7">Homohexamer.</text>
</comment>
<comment type="induction">
    <text>Induced by growth on glucose and ammonia.</text>
</comment>
<comment type="similarity">
    <text evidence="9">Belongs to the Glu/Leu/Phe/Val dehydrogenases family.</text>
</comment>
<name>DHE4_ECOLI</name>
<evidence type="ECO:0000250" key="1"/>
<evidence type="ECO:0000255" key="2">
    <source>
        <dbReference type="PROSITE-ProRule" id="PRU10011"/>
    </source>
</evidence>
<evidence type="ECO:0000269" key="3">
    <source>
    </source>
</evidence>
<evidence type="ECO:0000269" key="4">
    <source>
    </source>
</evidence>
<evidence type="ECO:0000269" key="5">
    <source>
    </source>
</evidence>
<evidence type="ECO:0000269" key="6">
    <source>
    </source>
</evidence>
<evidence type="ECO:0000269" key="7">
    <source ref="12"/>
</evidence>
<evidence type="ECO:0000303" key="8">
    <source>
    </source>
</evidence>
<evidence type="ECO:0000305" key="9"/>
<evidence type="ECO:0007829" key="10">
    <source>
        <dbReference type="PDB" id="3SBO"/>
    </source>
</evidence>
<evidence type="ECO:0007829" key="11">
    <source>
        <dbReference type="PDB" id="4BHT"/>
    </source>
</evidence>
<feature type="chain" id="PRO_0000182769" description="NADP-specific glutamate dehydrogenase">
    <location>
        <begin position="1"/>
        <end position="447"/>
    </location>
</feature>
<feature type="active site" description="Proton donor" evidence="2">
    <location>
        <position position="128"/>
    </location>
</feature>
<feature type="binding site" evidence="1">
    <location>
        <position position="92"/>
    </location>
    <ligand>
        <name>substrate</name>
    </ligand>
</feature>
<feature type="binding site" evidence="1">
    <location>
        <position position="113"/>
    </location>
    <ligand>
        <name>substrate</name>
    </ligand>
</feature>
<feature type="binding site" evidence="1">
    <location>
        <position position="116"/>
    </location>
    <ligand>
        <name>substrate</name>
    </ligand>
</feature>
<feature type="binding site" evidence="1">
    <location>
        <position position="167"/>
    </location>
    <ligand>
        <name>substrate</name>
    </ligand>
</feature>
<feature type="binding site" evidence="1">
    <location>
        <position position="211"/>
    </location>
    <ligand>
        <name>NADP(+)</name>
        <dbReference type="ChEBI" id="CHEBI:58349"/>
    </ligand>
</feature>
<feature type="binding site" evidence="1">
    <location>
        <position position="242"/>
    </location>
    <ligand>
        <name>NADP(+)</name>
        <dbReference type="ChEBI" id="CHEBI:58349"/>
    </ligand>
</feature>
<feature type="binding site" evidence="1">
    <location>
        <position position="380"/>
    </location>
    <ligand>
        <name>substrate</name>
    </ligand>
</feature>
<feature type="site" description="Important for catalysis">
    <location>
        <position position="168"/>
    </location>
</feature>
<feature type="mutagenesis site" description="Complete loss of dehydrogenase activity." evidence="6">
    <original>K</original>
    <variation>S</variation>
    <location>
        <position position="92"/>
    </location>
</feature>
<feature type="mutagenesis site" description="Reduces catalytic activity and increases pH optima for activity. Increases relative activity with amino acid substrates other than glutamate, especially L-norvaline." evidence="5">
    <original>K</original>
    <variation>H</variation>
    <location>
        <position position="128"/>
    </location>
</feature>
<feature type="mutagenesis site" description="Reduced catalytic activity and increases pH optima for activity. NADP-specific glutamate dehydrogenase." evidence="5">
    <original>K</original>
    <variation>R</variation>
    <location>
        <position position="128"/>
    </location>
</feature>
<feature type="sequence conflict" description="In Ref. 2; AAA23868." evidence="9" ref="2">
    <original>A</original>
    <variation>P</variation>
    <location>
        <position position="385"/>
    </location>
</feature>
<feature type="helix" evidence="11">
    <location>
        <begin position="7"/>
        <end position="15"/>
    </location>
</feature>
<feature type="helix" evidence="11">
    <location>
        <begin position="22"/>
        <end position="41"/>
    </location>
</feature>
<feature type="helix" evidence="11">
    <location>
        <begin position="43"/>
        <end position="49"/>
    </location>
</feature>
<feature type="helix" evidence="11">
    <location>
        <begin position="50"/>
        <end position="54"/>
    </location>
</feature>
<feature type="strand" evidence="11">
    <location>
        <begin position="58"/>
        <end position="68"/>
    </location>
</feature>
<feature type="strand" evidence="11">
    <location>
        <begin position="74"/>
        <end position="85"/>
    </location>
</feature>
<feature type="strand" evidence="11">
    <location>
        <begin position="87"/>
        <end position="97"/>
    </location>
</feature>
<feature type="helix" evidence="11">
    <location>
        <begin position="103"/>
        <end position="119"/>
    </location>
</feature>
<feature type="strand" evidence="10">
    <location>
        <begin position="121"/>
        <end position="123"/>
    </location>
</feature>
<feature type="strand" evidence="11">
    <location>
        <begin position="126"/>
        <end position="132"/>
    </location>
</feature>
<feature type="helix" evidence="11">
    <location>
        <begin position="140"/>
        <end position="154"/>
    </location>
</feature>
<feature type="helix" evidence="11">
    <location>
        <begin position="155"/>
        <end position="157"/>
    </location>
</feature>
<feature type="turn" evidence="11">
    <location>
        <begin position="160"/>
        <end position="162"/>
    </location>
</feature>
<feature type="strand" evidence="11">
    <location>
        <begin position="163"/>
        <end position="166"/>
    </location>
</feature>
<feature type="helix" evidence="11">
    <location>
        <begin position="173"/>
        <end position="187"/>
    </location>
</feature>
<feature type="helix" evidence="11">
    <location>
        <begin position="199"/>
        <end position="201"/>
    </location>
</feature>
<feature type="turn" evidence="11">
    <location>
        <begin position="205"/>
        <end position="209"/>
    </location>
</feature>
<feature type="helix" evidence="11">
    <location>
        <begin position="210"/>
        <end position="225"/>
    </location>
</feature>
<feature type="strand" evidence="11">
    <location>
        <begin position="234"/>
        <end position="238"/>
    </location>
</feature>
<feature type="helix" evidence="11">
    <location>
        <begin position="242"/>
        <end position="253"/>
    </location>
</feature>
<feature type="strand" evidence="11">
    <location>
        <begin position="260"/>
        <end position="263"/>
    </location>
</feature>
<feature type="strand" evidence="11">
    <location>
        <begin position="266"/>
        <end position="269"/>
    </location>
</feature>
<feature type="helix" evidence="11">
    <location>
        <begin position="276"/>
        <end position="286"/>
    </location>
</feature>
<feature type="strand" evidence="11">
    <location>
        <begin position="288"/>
        <end position="290"/>
    </location>
</feature>
<feature type="helix" evidence="11">
    <location>
        <begin position="293"/>
        <end position="300"/>
    </location>
</feature>
<feature type="strand" evidence="11">
    <location>
        <begin position="303"/>
        <end position="306"/>
    </location>
</feature>
<feature type="helix" evidence="11">
    <location>
        <begin position="310"/>
        <end position="312"/>
    </location>
</feature>
<feature type="strand" evidence="11">
    <location>
        <begin position="316"/>
        <end position="320"/>
    </location>
</feature>
<feature type="helix" evidence="11">
    <location>
        <begin position="329"/>
        <end position="337"/>
    </location>
</feature>
<feature type="strand" evidence="11">
    <location>
        <begin position="342"/>
        <end position="344"/>
    </location>
</feature>
<feature type="strand" evidence="11">
    <location>
        <begin position="346"/>
        <end position="349"/>
    </location>
</feature>
<feature type="helix" evidence="11">
    <location>
        <begin position="353"/>
        <end position="361"/>
    </location>
</feature>
<feature type="strand" evidence="11">
    <location>
        <begin position="365"/>
        <end position="367"/>
    </location>
</feature>
<feature type="helix" evidence="11">
    <location>
        <begin position="369"/>
        <end position="372"/>
    </location>
</feature>
<feature type="helix" evidence="11">
    <location>
        <begin position="375"/>
        <end position="389"/>
    </location>
</feature>
<feature type="helix" evidence="11">
    <location>
        <begin position="395"/>
        <end position="415"/>
    </location>
</feature>
<feature type="strand" evidence="11">
    <location>
        <begin position="419"/>
        <end position="422"/>
    </location>
</feature>
<feature type="helix" evidence="11">
    <location>
        <begin position="425"/>
        <end position="443"/>
    </location>
</feature>
<reference key="1">
    <citation type="journal article" date="1983" name="Nucleic Acids Res.">
        <title>Complete nucleotide sequence of the Escherichia coli gdhA gene.</title>
        <authorList>
            <person name="McPherson M.J."/>
            <person name="Wootton J.C."/>
        </authorList>
    </citation>
    <scope>NUCLEOTIDE SEQUENCE [GENOMIC DNA]</scope>
    <scope>PROTEIN SEQUENCE OF 1-36</scope>
    <source>
        <strain>K12</strain>
    </source>
</reference>
<reference key="2">
    <citation type="journal article" date="1984" name="Gene">
        <title>Complete nucleotide sequence of the glutamate dehydrogenase gene from Escherichia coli K-12.</title>
        <authorList>
            <person name="Valle F."/>
            <person name="Becerril B."/>
            <person name="Chen E."/>
            <person name="Seeburg P.H."/>
            <person name="Heyneker H."/>
            <person name="Bolivar F."/>
        </authorList>
    </citation>
    <scope>NUCLEOTIDE SEQUENCE [GENOMIC DNA]</scope>
</reference>
<reference key="3">
    <citation type="journal article" date="1996" name="DNA Res.">
        <title>A 570-kb DNA sequence of the Escherichia coli K-12 genome corresponding to the 28.0-40.1 min region on the linkage map.</title>
        <authorList>
            <person name="Aiba H."/>
            <person name="Baba T."/>
            <person name="Fujita K."/>
            <person name="Hayashi K."/>
            <person name="Inada T."/>
            <person name="Isono K."/>
            <person name="Itoh T."/>
            <person name="Kasai H."/>
            <person name="Kashimoto K."/>
            <person name="Kimura S."/>
            <person name="Kitakawa M."/>
            <person name="Kitagawa M."/>
            <person name="Makino K."/>
            <person name="Miki T."/>
            <person name="Mizobuchi K."/>
            <person name="Mori H."/>
            <person name="Mori T."/>
            <person name="Motomura K."/>
            <person name="Nakade S."/>
            <person name="Nakamura Y."/>
            <person name="Nashimoto H."/>
            <person name="Nishio Y."/>
            <person name="Oshima T."/>
            <person name="Saito N."/>
            <person name="Sampei G."/>
            <person name="Seki Y."/>
            <person name="Sivasundaram S."/>
            <person name="Tagami H."/>
            <person name="Takeda J."/>
            <person name="Takemoto K."/>
            <person name="Takeuchi Y."/>
            <person name="Wada C."/>
            <person name="Yamamoto Y."/>
            <person name="Horiuchi T."/>
        </authorList>
    </citation>
    <scope>NUCLEOTIDE SEQUENCE [LARGE SCALE GENOMIC DNA]</scope>
    <source>
        <strain>K12 / W3110 / ATCC 27325 / DSM 5911</strain>
    </source>
</reference>
<reference key="4">
    <citation type="journal article" date="1997" name="Science">
        <title>The complete genome sequence of Escherichia coli K-12.</title>
        <authorList>
            <person name="Blattner F.R."/>
            <person name="Plunkett G. III"/>
            <person name="Bloch C.A."/>
            <person name="Perna N.T."/>
            <person name="Burland V."/>
            <person name="Riley M."/>
            <person name="Collado-Vides J."/>
            <person name="Glasner J.D."/>
            <person name="Rode C.K."/>
            <person name="Mayhew G.F."/>
            <person name="Gregor J."/>
            <person name="Davis N.W."/>
            <person name="Kirkpatrick H.A."/>
            <person name="Goeden M.A."/>
            <person name="Rose D.J."/>
            <person name="Mau B."/>
            <person name="Shao Y."/>
        </authorList>
    </citation>
    <scope>NUCLEOTIDE SEQUENCE [LARGE SCALE GENOMIC DNA]</scope>
    <source>
        <strain>K12 / MG1655 / ATCC 47076</strain>
    </source>
</reference>
<reference key="5">
    <citation type="journal article" date="2006" name="Mol. Syst. Biol.">
        <title>Highly accurate genome sequences of Escherichia coli K-12 strains MG1655 and W3110.</title>
        <authorList>
            <person name="Hayashi K."/>
            <person name="Morooka N."/>
            <person name="Yamamoto Y."/>
            <person name="Fujita K."/>
            <person name="Isono K."/>
            <person name="Choi S."/>
            <person name="Ohtsubo E."/>
            <person name="Baba T."/>
            <person name="Wanner B.L."/>
            <person name="Mori H."/>
            <person name="Horiuchi T."/>
        </authorList>
    </citation>
    <scope>NUCLEOTIDE SEQUENCE [LARGE SCALE GENOMIC DNA]</scope>
    <source>
        <strain>K12 / W3110 / ATCC 27325 / DSM 5911</strain>
    </source>
</reference>
<reference key="6">
    <citation type="journal article" date="1997" name="Electrophoresis">
        <title>Comparing the predicted and observed properties of proteins encoded in the genome of Escherichia coli K-12.</title>
        <authorList>
            <person name="Link A.J."/>
            <person name="Robison K."/>
            <person name="Church G.M."/>
        </authorList>
    </citation>
    <scope>PROTEIN SEQUENCE OF 1-12</scope>
    <source>
        <strain>K12 / EMG2</strain>
    </source>
</reference>
<reference key="7">
    <citation type="journal article" date="1975" name="Biochim. Biophys. Acta">
        <title>Glutamate dehydrogenase from Escherichia coli: induction, purification and properties of the enzyme.</title>
        <authorList>
            <person name="Veronese F.M."/>
            <person name="Boccu E."/>
            <person name="Conventi L."/>
        </authorList>
    </citation>
    <scope>FUNCTION AS A GLUTAMATE DEHYDROGENASE</scope>
    <scope>CATALYTIC ACTIVITY</scope>
    <scope>BIOPHYSICOCHEMICAL PROPERTIES</scope>
    <scope>SUBUNIT</scope>
</reference>
<reference key="8">
    <citation type="journal article" date="1975" name="J. Bacteriol.">
        <title>Glutamate dehydrogenase from Escherichia coli: purification and properties.</title>
        <authorList>
            <person name="Sakamoto N."/>
            <person name="Kotre A.M."/>
            <person name="Savageau M.A."/>
        </authorList>
    </citation>
    <scope>FUNCTION AS A GLUTAMATE DEHYDROGENASE</scope>
    <scope>CATALYTIC ACTIVITY</scope>
    <scope>ACTIVITY REGULATION</scope>
    <scope>BIOPHYSICOCHEMICAL PROPERTIES</scope>
    <scope>SUBUNIT</scope>
</reference>
<reference key="9">
    <citation type="journal article" date="1988" name="Protein Eng.">
        <title>Multiple interactions of lysine-128 of Escherichia coli glutamate dehydrogenase revealed by site-directed mutagenesis studies.</title>
        <authorList>
            <person name="McPherson M.J."/>
            <person name="Baron A.J."/>
            <person name="Jones K.M."/>
            <person name="Price G.J."/>
            <person name="Wootton J.C."/>
        </authorList>
    </citation>
    <scope>MUTAGENESIS OF LYS-128</scope>
</reference>
<reference key="10">
    <citation type="journal article" date="1993" name="Mol. Gen. Genet.">
        <title>The gdhA1 point mutation in Escherichia coli K12 CLR207 alters a key lysine residue of glutamate dehydrogenase.</title>
        <authorList>
            <person name="Jones K.M."/>
            <person name="McPherson M.J."/>
            <person name="Baron A.J."/>
            <person name="Mattaj I.W."/>
            <person name="Riordan C.L."/>
            <person name="Wootton J.C."/>
        </authorList>
    </citation>
    <scope>MUTAGENESIS OF LYS-92</scope>
</reference>
<reference key="11">
    <citation type="journal article" date="1997" name="Electrophoresis">
        <title>Escherichia coli proteome analysis using the gene-protein database.</title>
        <authorList>
            <person name="VanBogelen R.A."/>
            <person name="Abshire K.Z."/>
            <person name="Moldover B."/>
            <person name="Olson E.R."/>
            <person name="Neidhardt F.C."/>
        </authorList>
    </citation>
    <scope>IDENTIFICATION BY 2D-GEL</scope>
</reference>
<reference key="12">
    <citation type="submission" date="2012-03" db="PDB data bank">
        <title>Structural determinants of cofactor specificity and domain flexibility in bacterial glutamate dehydrogenases.</title>
        <authorList>
            <person name="Oliveira T."/>
            <person name="Sharkey M.A."/>
            <person name="Hamza M."/>
            <person name="Engel P.C."/>
            <person name="Khan A.R."/>
        </authorList>
    </citation>
    <scope>X-RAY CRYSTALLOGRAPHY (2.5 ANGSTROMS)</scope>
    <scope>SUBUNIT</scope>
</reference>
<reference key="13">
    <citation type="journal article" date="2012" name="PLoS ONE">
        <title>Macro-to-micro structural proteomics: native source proteins for high-throughput crystallization.</title>
        <authorList>
            <person name="Totir M."/>
            <person name="Echols N."/>
            <person name="Nanao M."/>
            <person name="Gee C.L."/>
            <person name="Moskaleva A."/>
            <person name="Gradia S."/>
            <person name="Iavarone A.T."/>
            <person name="Berger J.M."/>
            <person name="May A.P."/>
            <person name="Zubieta C."/>
            <person name="Alber T."/>
        </authorList>
    </citation>
    <scope>X-RAY CRYSTALLOGRAPHY (3.2 ANGSTROMS) AND SUBUNIT</scope>
</reference>
<dbReference type="EC" id="1.4.1.4" evidence="3 4"/>
<dbReference type="EMBL" id="J01615">
    <property type="protein sequence ID" value="AAA87979.1"/>
    <property type="molecule type" value="Genomic_DNA"/>
</dbReference>
<dbReference type="EMBL" id="K02499">
    <property type="protein sequence ID" value="AAA23868.1"/>
    <property type="molecule type" value="Genomic_DNA"/>
</dbReference>
<dbReference type="EMBL" id="U00096">
    <property type="protein sequence ID" value="AAC74831.1"/>
    <property type="molecule type" value="Genomic_DNA"/>
</dbReference>
<dbReference type="EMBL" id="AP009048">
    <property type="protein sequence ID" value="BAA15550.1"/>
    <property type="molecule type" value="Genomic_DNA"/>
</dbReference>
<dbReference type="PIR" id="A00382">
    <property type="entry name" value="DEECEN"/>
</dbReference>
<dbReference type="RefSeq" id="NP_416275.1">
    <property type="nucleotide sequence ID" value="NC_000913.3"/>
</dbReference>
<dbReference type="RefSeq" id="WP_000373021.1">
    <property type="nucleotide sequence ID" value="NZ_SSZK01000001.1"/>
</dbReference>
<dbReference type="PDB" id="2YFH">
    <property type="method" value="X-ray"/>
    <property type="resolution" value="2.69 A"/>
    <property type="chains" value="A/B/C/D/E/F=202-405"/>
</dbReference>
<dbReference type="PDB" id="3SBO">
    <property type="method" value="X-ray"/>
    <property type="resolution" value="3.20 A"/>
    <property type="chains" value="A/B/C/D/E/F=1-447"/>
</dbReference>
<dbReference type="PDB" id="4BHT">
    <property type="method" value="X-ray"/>
    <property type="resolution" value="2.50 A"/>
    <property type="chains" value="A/B/C/D/E/F=1-447"/>
</dbReference>
<dbReference type="PDBsum" id="2YFH"/>
<dbReference type="PDBsum" id="3SBO"/>
<dbReference type="PDBsum" id="4BHT"/>
<dbReference type="SMR" id="P00370"/>
<dbReference type="BioGRID" id="4260322">
    <property type="interactions" value="629"/>
</dbReference>
<dbReference type="ComplexPortal" id="CPX-1976">
    <property type="entry name" value="Glutamate dehydrogenase complex"/>
</dbReference>
<dbReference type="DIP" id="DIP-9756N"/>
<dbReference type="FunCoup" id="P00370">
    <property type="interactions" value="697"/>
</dbReference>
<dbReference type="IntAct" id="P00370">
    <property type="interactions" value="1"/>
</dbReference>
<dbReference type="MINT" id="P00370"/>
<dbReference type="STRING" id="511145.b1761"/>
<dbReference type="jPOST" id="P00370"/>
<dbReference type="PaxDb" id="511145-b1761"/>
<dbReference type="EnsemblBacteria" id="AAC74831">
    <property type="protein sequence ID" value="AAC74831"/>
    <property type="gene ID" value="b1761"/>
</dbReference>
<dbReference type="GeneID" id="946802"/>
<dbReference type="KEGG" id="ecj:JW1750"/>
<dbReference type="KEGG" id="eco:b1761"/>
<dbReference type="KEGG" id="ecoc:C3026_10050"/>
<dbReference type="PATRIC" id="fig|1411691.4.peg.493"/>
<dbReference type="EchoBASE" id="EB0367"/>
<dbReference type="eggNOG" id="COG0334">
    <property type="taxonomic scope" value="Bacteria"/>
</dbReference>
<dbReference type="HOGENOM" id="CLU_025763_2_1_6"/>
<dbReference type="InParanoid" id="P00370"/>
<dbReference type="OMA" id="PCFAAFP"/>
<dbReference type="OrthoDB" id="9803297at2"/>
<dbReference type="PhylomeDB" id="P00370"/>
<dbReference type="BioCyc" id="EcoCyc:GDHA-MONOMER"/>
<dbReference type="BioCyc" id="MetaCyc:GDHA-MONOMER"/>
<dbReference type="BRENDA" id="1.4.1.4">
    <property type="organism ID" value="2026"/>
</dbReference>
<dbReference type="SABIO-RK" id="P00370"/>
<dbReference type="EvolutionaryTrace" id="P00370"/>
<dbReference type="PRO" id="PR:P00370"/>
<dbReference type="Proteomes" id="UP000000625">
    <property type="component" value="Chromosome"/>
</dbReference>
<dbReference type="GO" id="GO:0005737">
    <property type="term" value="C:cytoplasm"/>
    <property type="evidence" value="ECO:0000314"/>
    <property type="project" value="EcoliWiki"/>
</dbReference>
<dbReference type="GO" id="GO:0005829">
    <property type="term" value="C:cytosol"/>
    <property type="evidence" value="ECO:0000314"/>
    <property type="project" value="EcoCyc"/>
</dbReference>
<dbReference type="GO" id="GO:1990148">
    <property type="term" value="C:glutamate dehydrogenase complex"/>
    <property type="evidence" value="ECO:0000353"/>
    <property type="project" value="ComplexPortal"/>
</dbReference>
<dbReference type="GO" id="GO:0004354">
    <property type="term" value="F:glutamate dehydrogenase (NADP+) activity"/>
    <property type="evidence" value="ECO:0000314"/>
    <property type="project" value="EcoCyc"/>
</dbReference>
<dbReference type="GO" id="GO:0097216">
    <property type="term" value="F:guanosine tetraphosphate binding"/>
    <property type="evidence" value="ECO:0000314"/>
    <property type="project" value="EcoCyc"/>
</dbReference>
<dbReference type="GO" id="GO:0042802">
    <property type="term" value="F:identical protein binding"/>
    <property type="evidence" value="ECO:0000353"/>
    <property type="project" value="EcoCyc"/>
</dbReference>
<dbReference type="GO" id="GO:0006537">
    <property type="term" value="P:glutamate biosynthetic process"/>
    <property type="evidence" value="ECO:0000314"/>
    <property type="project" value="EcoCyc"/>
</dbReference>
<dbReference type="GO" id="GO:0006536">
    <property type="term" value="P:glutamate metabolic process"/>
    <property type="evidence" value="ECO:0000314"/>
    <property type="project" value="ComplexPortal"/>
</dbReference>
<dbReference type="CDD" id="cd05313">
    <property type="entry name" value="NAD_bind_2_Glu_DH"/>
    <property type="match status" value="1"/>
</dbReference>
<dbReference type="FunFam" id="1.10.285.10:FF:000001">
    <property type="entry name" value="Glutamate dehydrogenase"/>
    <property type="match status" value="1"/>
</dbReference>
<dbReference type="FunFam" id="1.10.285.10:FF:000002">
    <property type="entry name" value="Glutamate dehydrogenase"/>
    <property type="match status" value="1"/>
</dbReference>
<dbReference type="FunFam" id="3.40.50.10860:FF:000002">
    <property type="entry name" value="Glutamate dehydrogenase"/>
    <property type="match status" value="1"/>
</dbReference>
<dbReference type="FunFam" id="3.40.50.720:FF:000030">
    <property type="entry name" value="Glutamate dehydrogenase"/>
    <property type="match status" value="1"/>
</dbReference>
<dbReference type="Gene3D" id="1.10.285.10">
    <property type="entry name" value="Glutamate Dehydrogenase, chain A, domain 3"/>
    <property type="match status" value="2"/>
</dbReference>
<dbReference type="Gene3D" id="3.40.50.10860">
    <property type="entry name" value="Leucine Dehydrogenase, chain A, domain 1"/>
    <property type="match status" value="1"/>
</dbReference>
<dbReference type="Gene3D" id="3.40.50.720">
    <property type="entry name" value="NAD(P)-binding Rossmann-like Domain"/>
    <property type="match status" value="1"/>
</dbReference>
<dbReference type="InterPro" id="IPR046346">
    <property type="entry name" value="Aminoacid_DH-like_N_sf"/>
</dbReference>
<dbReference type="InterPro" id="IPR006095">
    <property type="entry name" value="Glu/Leu/Phe/Val/Trp_DH"/>
</dbReference>
<dbReference type="InterPro" id="IPR006096">
    <property type="entry name" value="Glu/Leu/Phe/Val/Trp_DH_C"/>
</dbReference>
<dbReference type="InterPro" id="IPR006097">
    <property type="entry name" value="Glu/Leu/Phe/Val/Trp_DH_dimer"/>
</dbReference>
<dbReference type="InterPro" id="IPR033524">
    <property type="entry name" value="Glu/Leu/Phe/Val_DH_AS"/>
</dbReference>
<dbReference type="InterPro" id="IPR014362">
    <property type="entry name" value="Glu_DH"/>
</dbReference>
<dbReference type="InterPro" id="IPR050724">
    <property type="entry name" value="Glu_Leu_Phe_Val_DH"/>
</dbReference>
<dbReference type="InterPro" id="IPR036291">
    <property type="entry name" value="NAD(P)-bd_dom_sf"/>
</dbReference>
<dbReference type="InterPro" id="IPR033922">
    <property type="entry name" value="NAD_bind_Glu_DH"/>
</dbReference>
<dbReference type="NCBIfam" id="NF006929">
    <property type="entry name" value="PRK09414.1"/>
    <property type="match status" value="1"/>
</dbReference>
<dbReference type="PANTHER" id="PTHR43571">
    <property type="entry name" value="NADP-SPECIFIC GLUTAMATE DEHYDROGENASE 1-RELATED"/>
    <property type="match status" value="1"/>
</dbReference>
<dbReference type="PANTHER" id="PTHR43571:SF1">
    <property type="entry name" value="NADP-SPECIFIC GLUTAMATE DEHYDROGENASE 1-RELATED"/>
    <property type="match status" value="1"/>
</dbReference>
<dbReference type="Pfam" id="PF00208">
    <property type="entry name" value="ELFV_dehydrog"/>
    <property type="match status" value="1"/>
</dbReference>
<dbReference type="Pfam" id="PF02812">
    <property type="entry name" value="ELFV_dehydrog_N"/>
    <property type="match status" value="1"/>
</dbReference>
<dbReference type="PIRSF" id="PIRSF000185">
    <property type="entry name" value="Glu_DH"/>
    <property type="match status" value="1"/>
</dbReference>
<dbReference type="PRINTS" id="PR00082">
    <property type="entry name" value="GLFDHDRGNASE"/>
</dbReference>
<dbReference type="SMART" id="SM00839">
    <property type="entry name" value="ELFV_dehydrog"/>
    <property type="match status" value="1"/>
</dbReference>
<dbReference type="SUPFAM" id="SSF53223">
    <property type="entry name" value="Aminoacid dehydrogenase-like, N-terminal domain"/>
    <property type="match status" value="1"/>
</dbReference>
<dbReference type="SUPFAM" id="SSF51735">
    <property type="entry name" value="NAD(P)-binding Rossmann-fold domains"/>
    <property type="match status" value="1"/>
</dbReference>
<dbReference type="PROSITE" id="PS00074">
    <property type="entry name" value="GLFV_DEHYDROGENASE"/>
    <property type="match status" value="1"/>
</dbReference>
<protein>
    <recommendedName>
        <fullName>NADP-specific glutamate dehydrogenase</fullName>
        <shortName>NADP-GDH</shortName>
        <ecNumber evidence="3 4">1.4.1.4</ecNumber>
    </recommendedName>
</protein>
<organism>
    <name type="scientific">Escherichia coli (strain K12)</name>
    <dbReference type="NCBI Taxonomy" id="83333"/>
    <lineage>
        <taxon>Bacteria</taxon>
        <taxon>Pseudomonadati</taxon>
        <taxon>Pseudomonadota</taxon>
        <taxon>Gammaproteobacteria</taxon>
        <taxon>Enterobacterales</taxon>
        <taxon>Enterobacteriaceae</taxon>
        <taxon>Escherichia</taxon>
    </lineage>
</organism>